<evidence type="ECO:0000255" key="1">
    <source>
        <dbReference type="HAMAP-Rule" id="MF_00149"/>
    </source>
</evidence>
<accession>B6EMQ9</accession>
<sequence length="652" mass="73307">MPIQILPARLANQIAAGEVVERPASVVKELVENSIDAGATRIDIDIEKGGSKLIRIRDNGSGIPKEELTLALSRHATSKITTLDDLEAIVSLGFRGEALASISSVSRLTLTSRTVAQEEAWSAHAEGRDMEVKLKPAAHPVGTTIDVVDLFFNTPARRKFLRTDKTEFTHIDELLKRIALSRLDITINLRHNGKSVRQYRAAQTKMQVEKRLAAVCGASFLQHALEVELEHGDLIFHGWISSPEGARAQGDVQYCYVNGRMMKDKLINHAIRQGYESSLSTNQYAAYILFIEINPHDVDVNVHPAKHEVRFHQARLVHDFIYQAIYGALQQAASLPEVTTTSDIEMDRESYFPPMKDYVRQSSLPLTDAHIENKSKQLKEAIEATPSYPNKASSDEWVSKAKPSMPKAYQSEKPSQRELNNYQHLLTTRDREDKTSNFEVNEVRIPKISEAKHNTVVVPQLKSAVSTSMLLGKVLSVVDKVFGLLQLGNQLQLVDLRYAEFIKSYGQLNSAHHEVLKAQPLLIPLSIGIDKDICNKLTEYQGILKQLGIDLKVKNNESLIVMAVCQPIRQQNLQQLIPNLLRYIYQINPSLDQVISWLSHQVQHDEACYSSAQAIQLVMELEQLWGNELSQFNNKLLKNIDITQAIQAFSHE</sequence>
<organism>
    <name type="scientific">Aliivibrio salmonicida (strain LFI1238)</name>
    <name type="common">Vibrio salmonicida (strain LFI1238)</name>
    <dbReference type="NCBI Taxonomy" id="316275"/>
    <lineage>
        <taxon>Bacteria</taxon>
        <taxon>Pseudomonadati</taxon>
        <taxon>Pseudomonadota</taxon>
        <taxon>Gammaproteobacteria</taxon>
        <taxon>Vibrionales</taxon>
        <taxon>Vibrionaceae</taxon>
        <taxon>Aliivibrio</taxon>
    </lineage>
</organism>
<proteinExistence type="inferred from homology"/>
<gene>
    <name evidence="1" type="primary">mutL</name>
    <name type="ordered locus">VSAL_I2779</name>
</gene>
<keyword id="KW-0227">DNA damage</keyword>
<keyword id="KW-0234">DNA repair</keyword>
<feature type="chain" id="PRO_1000096624" description="DNA mismatch repair protein MutL">
    <location>
        <begin position="1"/>
        <end position="652"/>
    </location>
</feature>
<reference key="1">
    <citation type="journal article" date="2008" name="BMC Genomics">
        <title>The genome sequence of the fish pathogen Aliivibrio salmonicida strain LFI1238 shows extensive evidence of gene decay.</title>
        <authorList>
            <person name="Hjerde E."/>
            <person name="Lorentzen M.S."/>
            <person name="Holden M.T."/>
            <person name="Seeger K."/>
            <person name="Paulsen S."/>
            <person name="Bason N."/>
            <person name="Churcher C."/>
            <person name="Harris D."/>
            <person name="Norbertczak H."/>
            <person name="Quail M.A."/>
            <person name="Sanders S."/>
            <person name="Thurston S."/>
            <person name="Parkhill J."/>
            <person name="Willassen N.P."/>
            <person name="Thomson N.R."/>
        </authorList>
    </citation>
    <scope>NUCLEOTIDE SEQUENCE [LARGE SCALE GENOMIC DNA]</scope>
    <source>
        <strain>LFI1238</strain>
    </source>
</reference>
<protein>
    <recommendedName>
        <fullName evidence="1">DNA mismatch repair protein MutL</fullName>
    </recommendedName>
</protein>
<comment type="function">
    <text evidence="1">This protein is involved in the repair of mismatches in DNA. It is required for dam-dependent methyl-directed DNA mismatch repair. May act as a 'molecular matchmaker', a protein that promotes the formation of a stable complex between two or more DNA-binding proteins in an ATP-dependent manner without itself being part of a final effector complex.</text>
</comment>
<comment type="similarity">
    <text evidence="1">Belongs to the DNA mismatch repair MutL/HexB family.</text>
</comment>
<name>MUTL_ALISL</name>
<dbReference type="EMBL" id="FM178379">
    <property type="protein sequence ID" value="CAQ80463.1"/>
    <property type="molecule type" value="Genomic_DNA"/>
</dbReference>
<dbReference type="RefSeq" id="WP_012551215.1">
    <property type="nucleotide sequence ID" value="NC_011312.1"/>
</dbReference>
<dbReference type="SMR" id="B6EMQ9"/>
<dbReference type="KEGG" id="vsa:VSAL_I2779"/>
<dbReference type="eggNOG" id="COG0323">
    <property type="taxonomic scope" value="Bacteria"/>
</dbReference>
<dbReference type="HOGENOM" id="CLU_004131_5_1_6"/>
<dbReference type="Proteomes" id="UP000001730">
    <property type="component" value="Chromosome 1"/>
</dbReference>
<dbReference type="GO" id="GO:0032300">
    <property type="term" value="C:mismatch repair complex"/>
    <property type="evidence" value="ECO:0007669"/>
    <property type="project" value="InterPro"/>
</dbReference>
<dbReference type="GO" id="GO:0005524">
    <property type="term" value="F:ATP binding"/>
    <property type="evidence" value="ECO:0007669"/>
    <property type="project" value="InterPro"/>
</dbReference>
<dbReference type="GO" id="GO:0016887">
    <property type="term" value="F:ATP hydrolysis activity"/>
    <property type="evidence" value="ECO:0007669"/>
    <property type="project" value="InterPro"/>
</dbReference>
<dbReference type="GO" id="GO:0140664">
    <property type="term" value="F:ATP-dependent DNA damage sensor activity"/>
    <property type="evidence" value="ECO:0007669"/>
    <property type="project" value="InterPro"/>
</dbReference>
<dbReference type="GO" id="GO:0030983">
    <property type="term" value="F:mismatched DNA binding"/>
    <property type="evidence" value="ECO:0007669"/>
    <property type="project" value="InterPro"/>
</dbReference>
<dbReference type="GO" id="GO:0006298">
    <property type="term" value="P:mismatch repair"/>
    <property type="evidence" value="ECO:0007669"/>
    <property type="project" value="UniProtKB-UniRule"/>
</dbReference>
<dbReference type="CDD" id="cd16926">
    <property type="entry name" value="HATPase_MutL-MLH-PMS-like"/>
    <property type="match status" value="1"/>
</dbReference>
<dbReference type="CDD" id="cd03482">
    <property type="entry name" value="MutL_Trans_MutL"/>
    <property type="match status" value="1"/>
</dbReference>
<dbReference type="FunFam" id="3.30.230.10:FF:000013">
    <property type="entry name" value="DNA mismatch repair endonuclease MutL"/>
    <property type="match status" value="1"/>
</dbReference>
<dbReference type="FunFam" id="3.30.565.10:FF:000003">
    <property type="entry name" value="DNA mismatch repair endonuclease MutL"/>
    <property type="match status" value="1"/>
</dbReference>
<dbReference type="Gene3D" id="3.30.230.10">
    <property type="match status" value="1"/>
</dbReference>
<dbReference type="Gene3D" id="3.30.565.10">
    <property type="entry name" value="Histidine kinase-like ATPase, C-terminal domain"/>
    <property type="match status" value="1"/>
</dbReference>
<dbReference type="Gene3D" id="3.30.1540.20">
    <property type="entry name" value="MutL, C-terminal domain, dimerisation subdomain"/>
    <property type="match status" value="1"/>
</dbReference>
<dbReference type="Gene3D" id="3.30.1370.100">
    <property type="entry name" value="MutL, C-terminal domain, regulatory subdomain"/>
    <property type="match status" value="1"/>
</dbReference>
<dbReference type="HAMAP" id="MF_00149">
    <property type="entry name" value="DNA_mis_repair"/>
    <property type="match status" value="1"/>
</dbReference>
<dbReference type="InterPro" id="IPR014762">
    <property type="entry name" value="DNA_mismatch_repair_CS"/>
</dbReference>
<dbReference type="InterPro" id="IPR020667">
    <property type="entry name" value="DNA_mismatch_repair_MutL"/>
</dbReference>
<dbReference type="InterPro" id="IPR013507">
    <property type="entry name" value="DNA_mismatch_S5_2-like"/>
</dbReference>
<dbReference type="InterPro" id="IPR036890">
    <property type="entry name" value="HATPase_C_sf"/>
</dbReference>
<dbReference type="InterPro" id="IPR002099">
    <property type="entry name" value="MutL/Mlh/PMS"/>
</dbReference>
<dbReference type="InterPro" id="IPR038973">
    <property type="entry name" value="MutL/Mlh/Pms-like"/>
</dbReference>
<dbReference type="InterPro" id="IPR014790">
    <property type="entry name" value="MutL_C"/>
</dbReference>
<dbReference type="InterPro" id="IPR042120">
    <property type="entry name" value="MutL_C_dimsub"/>
</dbReference>
<dbReference type="InterPro" id="IPR042121">
    <property type="entry name" value="MutL_C_regsub"/>
</dbReference>
<dbReference type="InterPro" id="IPR037198">
    <property type="entry name" value="MutL_C_sf"/>
</dbReference>
<dbReference type="InterPro" id="IPR020568">
    <property type="entry name" value="Ribosomal_Su5_D2-typ_SF"/>
</dbReference>
<dbReference type="InterPro" id="IPR014721">
    <property type="entry name" value="Ribsml_uS5_D2-typ_fold_subgr"/>
</dbReference>
<dbReference type="NCBIfam" id="TIGR00585">
    <property type="entry name" value="mutl"/>
    <property type="match status" value="1"/>
</dbReference>
<dbReference type="NCBIfam" id="NF000948">
    <property type="entry name" value="PRK00095.1-1"/>
    <property type="match status" value="1"/>
</dbReference>
<dbReference type="PANTHER" id="PTHR10073">
    <property type="entry name" value="DNA MISMATCH REPAIR PROTEIN MLH, PMS, MUTL"/>
    <property type="match status" value="1"/>
</dbReference>
<dbReference type="PANTHER" id="PTHR10073:SF12">
    <property type="entry name" value="DNA MISMATCH REPAIR PROTEIN MLH1"/>
    <property type="match status" value="1"/>
</dbReference>
<dbReference type="Pfam" id="PF01119">
    <property type="entry name" value="DNA_mis_repair"/>
    <property type="match status" value="1"/>
</dbReference>
<dbReference type="Pfam" id="PF13589">
    <property type="entry name" value="HATPase_c_3"/>
    <property type="match status" value="1"/>
</dbReference>
<dbReference type="Pfam" id="PF08676">
    <property type="entry name" value="MutL_C"/>
    <property type="match status" value="1"/>
</dbReference>
<dbReference type="SMART" id="SM01340">
    <property type="entry name" value="DNA_mis_repair"/>
    <property type="match status" value="1"/>
</dbReference>
<dbReference type="SMART" id="SM00853">
    <property type="entry name" value="MutL_C"/>
    <property type="match status" value="1"/>
</dbReference>
<dbReference type="SUPFAM" id="SSF55874">
    <property type="entry name" value="ATPase domain of HSP90 chaperone/DNA topoisomerase II/histidine kinase"/>
    <property type="match status" value="1"/>
</dbReference>
<dbReference type="SUPFAM" id="SSF118116">
    <property type="entry name" value="DNA mismatch repair protein MutL"/>
    <property type="match status" value="1"/>
</dbReference>
<dbReference type="SUPFAM" id="SSF54211">
    <property type="entry name" value="Ribosomal protein S5 domain 2-like"/>
    <property type="match status" value="1"/>
</dbReference>
<dbReference type="PROSITE" id="PS00058">
    <property type="entry name" value="DNA_MISMATCH_REPAIR_1"/>
    <property type="match status" value="1"/>
</dbReference>